<protein>
    <recommendedName>
        <fullName>Cytochrome b</fullName>
    </recommendedName>
    <alternativeName>
        <fullName>Complex III subunit 3</fullName>
    </alternativeName>
    <alternativeName>
        <fullName>Complex III subunit III</fullName>
    </alternativeName>
    <alternativeName>
        <fullName>Cytochrome b-c1 complex subunit 3</fullName>
    </alternativeName>
    <alternativeName>
        <fullName>Ubiquinol-cytochrome-c reductase complex cytochrome b subunit</fullName>
    </alternativeName>
</protein>
<organism>
    <name type="scientific">Planigale gilesi</name>
    <name type="common">Flat-skulled marsupial mouse</name>
    <dbReference type="NCBI Taxonomy" id="32556"/>
    <lineage>
        <taxon>Eukaryota</taxon>
        <taxon>Metazoa</taxon>
        <taxon>Chordata</taxon>
        <taxon>Craniata</taxon>
        <taxon>Vertebrata</taxon>
        <taxon>Euteleostomi</taxon>
        <taxon>Mammalia</taxon>
        <taxon>Metatheria</taxon>
        <taxon>Dasyuromorphia</taxon>
        <taxon>Dasyuridae</taxon>
        <taxon>Planigale</taxon>
    </lineage>
</organism>
<gene>
    <name type="primary">MT-CYB</name>
    <name type="synonym">COB</name>
    <name type="synonym">CYTB</name>
    <name type="synonym">MTCYB</name>
</gene>
<proteinExistence type="inferred from homology"/>
<geneLocation type="mitochondrion"/>
<reference key="1">
    <citation type="journal article" date="1994" name="J. Mammal. Evol.">
        <title>Phylogenetic structure of the marsupial family Dasyuridae based on cytochrome-b DNA sequences.</title>
        <authorList>
            <person name="Krajewski C."/>
            <person name="Painter J."/>
            <person name="Buckley L."/>
            <person name="Westerman M."/>
        </authorList>
    </citation>
    <scope>NUCLEOTIDE SEQUENCE [GENOMIC DNA]</scope>
</reference>
<evidence type="ECO:0000250" key="1"/>
<evidence type="ECO:0000250" key="2">
    <source>
        <dbReference type="UniProtKB" id="P00157"/>
    </source>
</evidence>
<evidence type="ECO:0000255" key="3">
    <source>
        <dbReference type="PROSITE-ProRule" id="PRU00967"/>
    </source>
</evidence>
<evidence type="ECO:0000255" key="4">
    <source>
        <dbReference type="PROSITE-ProRule" id="PRU00968"/>
    </source>
</evidence>
<accession>Q35459</accession>
<keyword id="KW-0249">Electron transport</keyword>
<keyword id="KW-0349">Heme</keyword>
<keyword id="KW-0408">Iron</keyword>
<keyword id="KW-0472">Membrane</keyword>
<keyword id="KW-0479">Metal-binding</keyword>
<keyword id="KW-0496">Mitochondrion</keyword>
<keyword id="KW-0999">Mitochondrion inner membrane</keyword>
<keyword id="KW-0679">Respiratory chain</keyword>
<keyword id="KW-0812">Transmembrane</keyword>
<keyword id="KW-1133">Transmembrane helix</keyword>
<keyword id="KW-0813">Transport</keyword>
<keyword id="KW-0830">Ubiquinone</keyword>
<comment type="function">
    <text evidence="2">Component of the ubiquinol-cytochrome c reductase complex (complex III or cytochrome b-c1 complex) that is part of the mitochondrial respiratory chain. The b-c1 complex mediates electron transfer from ubiquinol to cytochrome c. Contributes to the generation of a proton gradient across the mitochondrial membrane that is then used for ATP synthesis.</text>
</comment>
<comment type="cofactor">
    <cofactor evidence="2">
        <name>heme b</name>
        <dbReference type="ChEBI" id="CHEBI:60344"/>
    </cofactor>
    <text evidence="2">Binds 2 heme b groups non-covalently.</text>
</comment>
<comment type="subunit">
    <text evidence="2">The cytochrome bc1 complex contains 11 subunits: 3 respiratory subunits (MT-CYB, CYC1 and UQCRFS1), 2 core proteins (UQCRC1 and UQCRC2) and 6 low-molecular weight proteins (UQCRH/QCR6, UQCRB/QCR7, UQCRQ/QCR8, UQCR10/QCR9, UQCR11/QCR10 and a cleavage product of UQCRFS1). This cytochrome bc1 complex then forms a dimer.</text>
</comment>
<comment type="subcellular location">
    <subcellularLocation>
        <location evidence="2">Mitochondrion inner membrane</location>
        <topology evidence="2">Multi-pass membrane protein</topology>
    </subcellularLocation>
</comment>
<comment type="miscellaneous">
    <text evidence="1">Heme 1 (or BL or b562) is low-potential and absorbs at about 562 nm, and heme 2 (or BH or b566) is high-potential and absorbs at about 566 nm.</text>
</comment>
<comment type="similarity">
    <text evidence="3 4">Belongs to the cytochrome b family.</text>
</comment>
<comment type="caution">
    <text evidence="2">The full-length protein contains only eight transmembrane helices, not nine as predicted by bioinformatics tools.</text>
</comment>
<dbReference type="EMBL" id="U07589">
    <property type="protein sequence ID" value="AAB88765.1"/>
    <property type="molecule type" value="Genomic_DNA"/>
</dbReference>
<dbReference type="SMR" id="Q35459"/>
<dbReference type="GO" id="GO:0005743">
    <property type="term" value="C:mitochondrial inner membrane"/>
    <property type="evidence" value="ECO:0007669"/>
    <property type="project" value="UniProtKB-SubCell"/>
</dbReference>
<dbReference type="GO" id="GO:0045275">
    <property type="term" value="C:respiratory chain complex III"/>
    <property type="evidence" value="ECO:0007669"/>
    <property type="project" value="InterPro"/>
</dbReference>
<dbReference type="GO" id="GO:0046872">
    <property type="term" value="F:metal ion binding"/>
    <property type="evidence" value="ECO:0007669"/>
    <property type="project" value="UniProtKB-KW"/>
</dbReference>
<dbReference type="GO" id="GO:0008121">
    <property type="term" value="F:ubiquinol-cytochrome-c reductase activity"/>
    <property type="evidence" value="ECO:0007669"/>
    <property type="project" value="InterPro"/>
</dbReference>
<dbReference type="GO" id="GO:0006122">
    <property type="term" value="P:mitochondrial electron transport, ubiquinol to cytochrome c"/>
    <property type="evidence" value="ECO:0007669"/>
    <property type="project" value="TreeGrafter"/>
</dbReference>
<dbReference type="CDD" id="cd00290">
    <property type="entry name" value="cytochrome_b_C"/>
    <property type="match status" value="1"/>
</dbReference>
<dbReference type="CDD" id="cd00284">
    <property type="entry name" value="Cytochrome_b_N"/>
    <property type="match status" value="1"/>
</dbReference>
<dbReference type="FunFam" id="1.20.810.10:FF:000002">
    <property type="entry name" value="Cytochrome b"/>
    <property type="match status" value="1"/>
</dbReference>
<dbReference type="Gene3D" id="1.20.810.10">
    <property type="entry name" value="Cytochrome Bc1 Complex, Chain C"/>
    <property type="match status" value="1"/>
</dbReference>
<dbReference type="InterPro" id="IPR005798">
    <property type="entry name" value="Cyt_b/b6_C"/>
</dbReference>
<dbReference type="InterPro" id="IPR036150">
    <property type="entry name" value="Cyt_b/b6_C_sf"/>
</dbReference>
<dbReference type="InterPro" id="IPR005797">
    <property type="entry name" value="Cyt_b/b6_N"/>
</dbReference>
<dbReference type="InterPro" id="IPR027387">
    <property type="entry name" value="Cytb/b6-like_sf"/>
</dbReference>
<dbReference type="InterPro" id="IPR030689">
    <property type="entry name" value="Cytochrome_b"/>
</dbReference>
<dbReference type="InterPro" id="IPR048260">
    <property type="entry name" value="Cytochrome_b_C_euk/bac"/>
</dbReference>
<dbReference type="InterPro" id="IPR048259">
    <property type="entry name" value="Cytochrome_b_N_euk/bac"/>
</dbReference>
<dbReference type="InterPro" id="IPR016174">
    <property type="entry name" value="Di-haem_cyt_TM"/>
</dbReference>
<dbReference type="PANTHER" id="PTHR19271">
    <property type="entry name" value="CYTOCHROME B"/>
    <property type="match status" value="1"/>
</dbReference>
<dbReference type="PANTHER" id="PTHR19271:SF16">
    <property type="entry name" value="CYTOCHROME B"/>
    <property type="match status" value="1"/>
</dbReference>
<dbReference type="Pfam" id="PF00032">
    <property type="entry name" value="Cytochrom_B_C"/>
    <property type="match status" value="1"/>
</dbReference>
<dbReference type="Pfam" id="PF00033">
    <property type="entry name" value="Cytochrome_B"/>
    <property type="match status" value="1"/>
</dbReference>
<dbReference type="PIRSF" id="PIRSF038885">
    <property type="entry name" value="COB"/>
    <property type="match status" value="1"/>
</dbReference>
<dbReference type="SUPFAM" id="SSF81648">
    <property type="entry name" value="a domain/subunit of cytochrome bc1 complex (Ubiquinol-cytochrome c reductase)"/>
    <property type="match status" value="1"/>
</dbReference>
<dbReference type="SUPFAM" id="SSF81342">
    <property type="entry name" value="Transmembrane di-heme cytochromes"/>
    <property type="match status" value="1"/>
</dbReference>
<dbReference type="PROSITE" id="PS51003">
    <property type="entry name" value="CYTB_CTER"/>
    <property type="match status" value="1"/>
</dbReference>
<dbReference type="PROSITE" id="PS51002">
    <property type="entry name" value="CYTB_NTER"/>
    <property type="match status" value="1"/>
</dbReference>
<name>CYB_PLAGI</name>
<sequence>MTNLRKTHPLMKIINHSFIDLPAPSNISAWWNFGSLLGICLVIQILTGLFLAMHYTSDTLTAFSSVAHICRDVNYGWLIRNLHANGASMFFMCLYIHVGRGFYYGSYLNKETWNIGVILLLTVMATAFVGYVLPWGQMSFWGATVITNLLSAIPYIGTTLAEWIWGGFAVDKATLTRFFAFHFILPFIITALVIVHLLFLHETGSNNPSGINPDSDKIPFHPYYTIKDALGLMFLLLTLLMLALFSPDSLGDPDNFSPANPLNTPPHIKPEWYFLFAYAILRSIPNKLGGVLALLASILILLIIPFLHTANQRSMMFRPVSQTLFWILTANLITLTWIGGQLVEQPFIIIGQLASILYFLLILVLMPLAGLFKNYMLKLKW</sequence>
<feature type="chain" id="PRO_0000061411" description="Cytochrome b">
    <location>
        <begin position="1"/>
        <end position="381"/>
    </location>
</feature>
<feature type="transmembrane region" description="Helical" evidence="2">
    <location>
        <begin position="33"/>
        <end position="53"/>
    </location>
</feature>
<feature type="transmembrane region" description="Helical" evidence="2">
    <location>
        <begin position="77"/>
        <end position="98"/>
    </location>
</feature>
<feature type="transmembrane region" description="Helical" evidence="2">
    <location>
        <begin position="113"/>
        <end position="133"/>
    </location>
</feature>
<feature type="transmembrane region" description="Helical" evidence="2">
    <location>
        <begin position="178"/>
        <end position="198"/>
    </location>
</feature>
<feature type="transmembrane region" description="Helical" evidence="2">
    <location>
        <begin position="226"/>
        <end position="246"/>
    </location>
</feature>
<feature type="transmembrane region" description="Helical" evidence="2">
    <location>
        <begin position="288"/>
        <end position="308"/>
    </location>
</feature>
<feature type="transmembrane region" description="Helical" evidence="2">
    <location>
        <begin position="320"/>
        <end position="340"/>
    </location>
</feature>
<feature type="transmembrane region" description="Helical" evidence="2">
    <location>
        <begin position="347"/>
        <end position="367"/>
    </location>
</feature>
<feature type="binding site" description="axial binding residue" evidence="2">
    <location>
        <position position="83"/>
    </location>
    <ligand>
        <name>heme b</name>
        <dbReference type="ChEBI" id="CHEBI:60344"/>
        <label>b562</label>
    </ligand>
    <ligandPart>
        <name>Fe</name>
        <dbReference type="ChEBI" id="CHEBI:18248"/>
    </ligandPart>
</feature>
<feature type="binding site" description="axial binding residue" evidence="2">
    <location>
        <position position="97"/>
    </location>
    <ligand>
        <name>heme b</name>
        <dbReference type="ChEBI" id="CHEBI:60344"/>
        <label>b566</label>
    </ligand>
    <ligandPart>
        <name>Fe</name>
        <dbReference type="ChEBI" id="CHEBI:18248"/>
    </ligandPart>
</feature>
<feature type="binding site" description="axial binding residue" evidence="2">
    <location>
        <position position="182"/>
    </location>
    <ligand>
        <name>heme b</name>
        <dbReference type="ChEBI" id="CHEBI:60344"/>
        <label>b562</label>
    </ligand>
    <ligandPart>
        <name>Fe</name>
        <dbReference type="ChEBI" id="CHEBI:18248"/>
    </ligandPart>
</feature>
<feature type="binding site" description="axial binding residue" evidence="2">
    <location>
        <position position="196"/>
    </location>
    <ligand>
        <name>heme b</name>
        <dbReference type="ChEBI" id="CHEBI:60344"/>
        <label>b566</label>
    </ligand>
    <ligandPart>
        <name>Fe</name>
        <dbReference type="ChEBI" id="CHEBI:18248"/>
    </ligandPart>
</feature>
<feature type="binding site" evidence="2">
    <location>
        <position position="201"/>
    </location>
    <ligand>
        <name>a ubiquinone</name>
        <dbReference type="ChEBI" id="CHEBI:16389"/>
    </ligand>
</feature>